<keyword id="KW-0963">Cytoplasm</keyword>
<keyword id="KW-0238">DNA-binding</keyword>
<keyword id="KW-0597">Phosphoprotein</keyword>
<keyword id="KW-0804">Transcription</keyword>
<keyword id="KW-0805">Transcription regulation</keyword>
<keyword id="KW-0902">Two-component regulatory system</keyword>
<sequence>MRVLLIEDDSAIAQSIELMLKSESFNVYTTDLGEEGIDLGKLYDYDIILLDLNLPDMSGYEVLRTLRLSKVKTPILILSGMAGIEDKVRGLGFGADDYMTKPFHKDELIARIHAIVRRSKGHAQSVITTGDLVVNLDAKTVEVAGQRVHLTGKEYQMLELLSLRKGTTLTKEMFLNHLYGGMDEPELKIIDVFICKLRKKLDAVSGNQSYIETVWGRGYVLREPDAEMRESA</sequence>
<reference key="1">
    <citation type="submission" date="1998-03" db="EMBL/GenBank/DDBJ databases">
        <title>Two-component cell cycle regulator in Brucella species.</title>
        <authorList>
            <person name="Devos D.P."/>
            <person name="Depiereux E."/>
            <person name="Letesson J.-J."/>
        </authorList>
    </citation>
    <scope>NUCLEOTIDE SEQUENCE [GENOMIC DNA]</scope>
</reference>
<reference key="2">
    <citation type="journal article" date="2002" name="Mol. Microbiol.">
        <title>Plasticity of a transcriptional regulation network among alpha-proteobacteria is supported by the identification of CtrA targets in Brucella abortus.</title>
        <authorList>
            <person name="Bellefontaine A.F."/>
            <person name="Pierreux C.E."/>
            <person name="Mertens P."/>
            <person name="Vandenhaute J."/>
            <person name="Letesson J.J."/>
            <person name="De Bolle X."/>
        </authorList>
    </citation>
    <scope>NUCLEOTIDE SEQUENCE [GENOMIC DNA]</scope>
    <scope>FUNCTION AS RESPONSE REGULATOR</scope>
    <scope>ROLE IN CELL DIVISION</scope>
    <scope>PHOSPHORYLATION AT ASP-51</scope>
    <scope>DISRUPTION PHENOTYPE</scope>
    <scope>MUTAGENESIS OF ASP-51</scope>
    <source>
        <strain>544 / Biovar 1</strain>
    </source>
</reference>
<reference key="3">
    <citation type="journal article" date="2005" name="J. Bacteriol.">
        <title>Completion of the genome sequence of Brucella abortus and comparison to the highly similar genomes of Brucella melitensis and Brucella suis.</title>
        <authorList>
            <person name="Halling S.M."/>
            <person name="Peterson-Burch B.D."/>
            <person name="Bricker B.J."/>
            <person name="Zuerner R.L."/>
            <person name="Qing Z."/>
            <person name="Li L.-L."/>
            <person name="Kapur V."/>
            <person name="Alt D.P."/>
            <person name="Olsen S.C."/>
        </authorList>
    </citation>
    <scope>NUCLEOTIDE SEQUENCE [LARGE SCALE GENOMIC DNA]</scope>
    <source>
        <strain>9-941</strain>
    </source>
</reference>
<name>CTRA_BRUAB</name>
<evidence type="ECO:0000250" key="1">
    <source>
        <dbReference type="UniProtKB" id="Q2YQA4"/>
    </source>
</evidence>
<evidence type="ECO:0000255" key="2">
    <source>
        <dbReference type="PROSITE-ProRule" id="PRU00169"/>
    </source>
</evidence>
<evidence type="ECO:0000255" key="3">
    <source>
        <dbReference type="PROSITE-ProRule" id="PRU01091"/>
    </source>
</evidence>
<evidence type="ECO:0000269" key="4">
    <source>
    </source>
</evidence>
<evidence type="ECO:0000303" key="5">
    <source>
    </source>
</evidence>
<evidence type="ECO:0000305" key="6"/>
<accession>Q9ZHS1</accession>
<accession>Q57BS3</accession>
<protein>
    <recommendedName>
        <fullName>Cell cycle response regulator CtrA</fullName>
    </recommendedName>
    <alternativeName>
        <fullName evidence="5">Cell cycle transcriptional regulator A</fullName>
    </alternativeName>
</protein>
<dbReference type="EMBL" id="AF051939">
    <property type="protein sequence ID" value="AAC69920.1"/>
    <property type="molecule type" value="mRNA"/>
</dbReference>
<dbReference type="EMBL" id="AF411570">
    <property type="protein sequence ID" value="AAL86376.1"/>
    <property type="molecule type" value="Genomic_DNA"/>
</dbReference>
<dbReference type="EMBL" id="AE017223">
    <property type="protein sequence ID" value="AAX74911.1"/>
    <property type="molecule type" value="Genomic_DNA"/>
</dbReference>
<dbReference type="PIR" id="AI3304">
    <property type="entry name" value="AI3304"/>
</dbReference>
<dbReference type="RefSeq" id="WP_002964699.1">
    <property type="nucleotide sequence ID" value="NC_006932.1"/>
</dbReference>
<dbReference type="SMR" id="Q9ZHS1"/>
<dbReference type="EnsemblBacteria" id="AAX74911">
    <property type="protein sequence ID" value="AAX74911"/>
    <property type="gene ID" value="BruAb1_1586"/>
</dbReference>
<dbReference type="GeneID" id="97533230"/>
<dbReference type="KEGG" id="bmb:BruAb1_1586"/>
<dbReference type="HOGENOM" id="CLU_000445_30_1_5"/>
<dbReference type="Proteomes" id="UP000000540">
    <property type="component" value="Chromosome I"/>
</dbReference>
<dbReference type="GO" id="GO:0005829">
    <property type="term" value="C:cytosol"/>
    <property type="evidence" value="ECO:0007669"/>
    <property type="project" value="TreeGrafter"/>
</dbReference>
<dbReference type="GO" id="GO:0032993">
    <property type="term" value="C:protein-DNA complex"/>
    <property type="evidence" value="ECO:0007669"/>
    <property type="project" value="TreeGrafter"/>
</dbReference>
<dbReference type="GO" id="GO:0000156">
    <property type="term" value="F:phosphorelay response regulator activity"/>
    <property type="evidence" value="ECO:0007669"/>
    <property type="project" value="TreeGrafter"/>
</dbReference>
<dbReference type="GO" id="GO:0000976">
    <property type="term" value="F:transcription cis-regulatory region binding"/>
    <property type="evidence" value="ECO:0007669"/>
    <property type="project" value="TreeGrafter"/>
</dbReference>
<dbReference type="GO" id="GO:0006355">
    <property type="term" value="P:regulation of DNA-templated transcription"/>
    <property type="evidence" value="ECO:0007669"/>
    <property type="project" value="InterPro"/>
</dbReference>
<dbReference type="CDD" id="cd17616">
    <property type="entry name" value="REC_OmpR_CtrA"/>
    <property type="match status" value="1"/>
</dbReference>
<dbReference type="CDD" id="cd00383">
    <property type="entry name" value="trans_reg_C"/>
    <property type="match status" value="1"/>
</dbReference>
<dbReference type="FunFam" id="1.10.10.10:FF:000052">
    <property type="entry name" value="Cell cycle response regulator"/>
    <property type="match status" value="1"/>
</dbReference>
<dbReference type="FunFam" id="3.40.50.2300:FF:000011">
    <property type="entry name" value="Cell cycle response regulator CtrA"/>
    <property type="match status" value="1"/>
</dbReference>
<dbReference type="Gene3D" id="3.40.50.2300">
    <property type="match status" value="1"/>
</dbReference>
<dbReference type="Gene3D" id="6.10.250.690">
    <property type="match status" value="1"/>
</dbReference>
<dbReference type="Gene3D" id="1.10.10.10">
    <property type="entry name" value="Winged helix-like DNA-binding domain superfamily/Winged helix DNA-binding domain"/>
    <property type="match status" value="1"/>
</dbReference>
<dbReference type="InterPro" id="IPR011006">
    <property type="entry name" value="CheY-like_superfamily"/>
</dbReference>
<dbReference type="InterPro" id="IPR001867">
    <property type="entry name" value="OmpR/PhoB-type_DNA-bd"/>
</dbReference>
<dbReference type="InterPro" id="IPR001789">
    <property type="entry name" value="Sig_transdc_resp-reg_receiver"/>
</dbReference>
<dbReference type="InterPro" id="IPR039420">
    <property type="entry name" value="WalR-like"/>
</dbReference>
<dbReference type="InterPro" id="IPR036388">
    <property type="entry name" value="WH-like_DNA-bd_sf"/>
</dbReference>
<dbReference type="NCBIfam" id="NF045991">
    <property type="entry name" value="RespRegCtrARhodob"/>
    <property type="match status" value="1"/>
</dbReference>
<dbReference type="PANTHER" id="PTHR48111">
    <property type="entry name" value="REGULATOR OF RPOS"/>
    <property type="match status" value="1"/>
</dbReference>
<dbReference type="PANTHER" id="PTHR48111:SF22">
    <property type="entry name" value="REGULATOR OF RPOS"/>
    <property type="match status" value="1"/>
</dbReference>
<dbReference type="Pfam" id="PF00072">
    <property type="entry name" value="Response_reg"/>
    <property type="match status" value="1"/>
</dbReference>
<dbReference type="Pfam" id="PF00486">
    <property type="entry name" value="Trans_reg_C"/>
    <property type="match status" value="1"/>
</dbReference>
<dbReference type="SMART" id="SM00448">
    <property type="entry name" value="REC"/>
    <property type="match status" value="1"/>
</dbReference>
<dbReference type="SMART" id="SM00862">
    <property type="entry name" value="Trans_reg_C"/>
    <property type="match status" value="1"/>
</dbReference>
<dbReference type="SUPFAM" id="SSF52172">
    <property type="entry name" value="CheY-like"/>
    <property type="match status" value="1"/>
</dbReference>
<dbReference type="PROSITE" id="PS51755">
    <property type="entry name" value="OMPR_PHOB"/>
    <property type="match status" value="1"/>
</dbReference>
<dbReference type="PROSITE" id="PS50110">
    <property type="entry name" value="RESPONSE_REGULATORY"/>
    <property type="match status" value="1"/>
</dbReference>
<proteinExistence type="evidence at protein level"/>
<organism>
    <name type="scientific">Brucella abortus biovar 1 (strain 9-941)</name>
    <dbReference type="NCBI Taxonomy" id="262698"/>
    <lineage>
        <taxon>Bacteria</taxon>
        <taxon>Pseudomonadati</taxon>
        <taxon>Pseudomonadota</taxon>
        <taxon>Alphaproteobacteria</taxon>
        <taxon>Hyphomicrobiales</taxon>
        <taxon>Brucellaceae</taxon>
        <taxon>Brucella/Ochrobactrum group</taxon>
        <taxon>Brucella</taxon>
    </lineage>
</organism>
<gene>
    <name type="primary">ctrA</name>
    <name type="ordered locus">BruAb1_1586</name>
</gene>
<feature type="chain" id="PRO_0000363197" description="Cell cycle response regulator CtrA">
    <location>
        <begin position="1"/>
        <end position="232"/>
    </location>
</feature>
<feature type="domain" description="Response regulatory" evidence="2">
    <location>
        <begin position="2"/>
        <end position="116"/>
    </location>
</feature>
<feature type="DNA-binding region" description="OmpR/PhoB-type" evidence="3">
    <location>
        <begin position="124"/>
        <end position="223"/>
    </location>
</feature>
<feature type="modified residue" description="4-aspartylphosphate" evidence="2 4">
    <location>
        <position position="51"/>
    </location>
</feature>
<feature type="mutagenesis site" description="No phosphorylation." evidence="4">
    <original>D</original>
    <variation>E</variation>
    <location>
        <position position="51"/>
    </location>
</feature>
<comment type="function">
    <text evidence="1 4">Component of a regulatory phosphorelay system that controls B.abortus cell growth, division, and intracellular survival inside mammalian host cells. This signaling pathway is composed of CckA, ChpT, CtrA and CpdR. CtrA is a response regulator substrate of ChpT (By similarity). When phosphorylated, directly regulates the expression of ccrM. Is also probably involved in the transcriptional regulation of rpoD, pleC, minC and ftsE genes (PubMed:11929544).</text>
</comment>
<comment type="subunit">
    <text evidence="1">Forms an asymmetric heterotetramer with ChpT (2:2). There are at least two modes of interaction between ChpT and CtrA, only one of which is competent to catalyze His-Asp phosphoryl transfer.</text>
</comment>
<comment type="subcellular location">
    <subcellularLocation>
        <location evidence="6">Cytoplasm</location>
    </subcellularLocation>
</comment>
<comment type="PTM">
    <text evidence="1 4">Is phosphorylated by ChpT-P on Asp-51.</text>
</comment>
<comment type="disruption phenotype">
    <text evidence="4">Lethal.</text>
</comment>